<keyword id="KW-0150">Chloroplast</keyword>
<keyword id="KW-0240">DNA-directed RNA polymerase</keyword>
<keyword id="KW-0548">Nucleotidyltransferase</keyword>
<keyword id="KW-0934">Plastid</keyword>
<keyword id="KW-0804">Transcription</keyword>
<keyword id="KW-0808">Transferase</keyword>
<dbReference type="EC" id="2.7.7.6" evidence="1"/>
<dbReference type="EMBL" id="AF050665">
    <property type="protein sequence ID" value="AAC95318.1"/>
    <property type="molecule type" value="Genomic_DNA"/>
</dbReference>
<dbReference type="RefSeq" id="YP_009258378.1">
    <property type="nucleotide sequence ID" value="NC_030355.1"/>
</dbReference>
<dbReference type="SMR" id="O98462"/>
<dbReference type="GeneID" id="27984706"/>
<dbReference type="GO" id="GO:0009507">
    <property type="term" value="C:chloroplast"/>
    <property type="evidence" value="ECO:0007669"/>
    <property type="project" value="UniProtKB-SubCell"/>
</dbReference>
<dbReference type="GO" id="GO:0000428">
    <property type="term" value="C:DNA-directed RNA polymerase complex"/>
    <property type="evidence" value="ECO:0007669"/>
    <property type="project" value="UniProtKB-KW"/>
</dbReference>
<dbReference type="GO" id="GO:0005739">
    <property type="term" value="C:mitochondrion"/>
    <property type="evidence" value="ECO:0007669"/>
    <property type="project" value="GOC"/>
</dbReference>
<dbReference type="GO" id="GO:0003677">
    <property type="term" value="F:DNA binding"/>
    <property type="evidence" value="ECO:0007669"/>
    <property type="project" value="UniProtKB-UniRule"/>
</dbReference>
<dbReference type="GO" id="GO:0003899">
    <property type="term" value="F:DNA-directed RNA polymerase activity"/>
    <property type="evidence" value="ECO:0007669"/>
    <property type="project" value="UniProtKB-UniRule"/>
</dbReference>
<dbReference type="GO" id="GO:0046983">
    <property type="term" value="F:protein dimerization activity"/>
    <property type="evidence" value="ECO:0007669"/>
    <property type="project" value="InterPro"/>
</dbReference>
<dbReference type="GO" id="GO:0006351">
    <property type="term" value="P:DNA-templated transcription"/>
    <property type="evidence" value="ECO:0007669"/>
    <property type="project" value="UniProtKB-UniRule"/>
</dbReference>
<dbReference type="CDD" id="cd06928">
    <property type="entry name" value="RNAP_alpha_NTD"/>
    <property type="match status" value="1"/>
</dbReference>
<dbReference type="FunFam" id="2.170.120.12:FF:000001">
    <property type="entry name" value="DNA-directed RNA polymerase subunit alpha"/>
    <property type="match status" value="1"/>
</dbReference>
<dbReference type="Gene3D" id="1.10.150.20">
    <property type="entry name" value="5' to 3' exonuclease, C-terminal subdomain"/>
    <property type="match status" value="1"/>
</dbReference>
<dbReference type="Gene3D" id="2.170.120.12">
    <property type="entry name" value="DNA-directed RNA polymerase, insert domain"/>
    <property type="match status" value="1"/>
</dbReference>
<dbReference type="Gene3D" id="3.30.1360.10">
    <property type="entry name" value="RNA polymerase, RBP11-like subunit"/>
    <property type="match status" value="1"/>
</dbReference>
<dbReference type="HAMAP" id="MF_00059">
    <property type="entry name" value="RNApol_bact_RpoA"/>
    <property type="match status" value="1"/>
</dbReference>
<dbReference type="InterPro" id="IPR011262">
    <property type="entry name" value="DNA-dir_RNA_pol_insert"/>
</dbReference>
<dbReference type="InterPro" id="IPR011263">
    <property type="entry name" value="DNA-dir_RNA_pol_RpoA/D/Rpb3"/>
</dbReference>
<dbReference type="InterPro" id="IPR011773">
    <property type="entry name" value="DNA-dir_RpoA"/>
</dbReference>
<dbReference type="InterPro" id="IPR036603">
    <property type="entry name" value="RBP11-like"/>
</dbReference>
<dbReference type="InterPro" id="IPR011260">
    <property type="entry name" value="RNAP_asu_C"/>
</dbReference>
<dbReference type="InterPro" id="IPR036643">
    <property type="entry name" value="RNApol_insert_sf"/>
</dbReference>
<dbReference type="NCBIfam" id="TIGR02027">
    <property type="entry name" value="rpoA"/>
    <property type="match status" value="1"/>
</dbReference>
<dbReference type="Pfam" id="PF01000">
    <property type="entry name" value="RNA_pol_A_bac"/>
    <property type="match status" value="1"/>
</dbReference>
<dbReference type="Pfam" id="PF03118">
    <property type="entry name" value="RNA_pol_A_CTD"/>
    <property type="match status" value="1"/>
</dbReference>
<dbReference type="Pfam" id="PF01193">
    <property type="entry name" value="RNA_pol_L"/>
    <property type="match status" value="1"/>
</dbReference>
<dbReference type="SMART" id="SM00662">
    <property type="entry name" value="RPOLD"/>
    <property type="match status" value="1"/>
</dbReference>
<dbReference type="SUPFAM" id="SSF47789">
    <property type="entry name" value="C-terminal domain of RNA polymerase alpha subunit"/>
    <property type="match status" value="1"/>
</dbReference>
<dbReference type="SUPFAM" id="SSF56553">
    <property type="entry name" value="Insert subdomain of RNA polymerase alpha subunit"/>
    <property type="match status" value="1"/>
</dbReference>
<dbReference type="SUPFAM" id="SSF55257">
    <property type="entry name" value="RBP11-like subunits of RNA polymerase"/>
    <property type="match status" value="1"/>
</dbReference>
<evidence type="ECO:0000255" key="1">
    <source>
        <dbReference type="HAMAP-Rule" id="MF_00059"/>
    </source>
</evidence>
<comment type="function">
    <text evidence="1">DNA-dependent RNA polymerase catalyzes the transcription of DNA into RNA using the four ribonucleoside triphosphates as substrates.</text>
</comment>
<comment type="catalytic activity">
    <reaction evidence="1">
        <text>RNA(n) + a ribonucleoside 5'-triphosphate = RNA(n+1) + diphosphate</text>
        <dbReference type="Rhea" id="RHEA:21248"/>
        <dbReference type="Rhea" id="RHEA-COMP:14527"/>
        <dbReference type="Rhea" id="RHEA-COMP:17342"/>
        <dbReference type="ChEBI" id="CHEBI:33019"/>
        <dbReference type="ChEBI" id="CHEBI:61557"/>
        <dbReference type="ChEBI" id="CHEBI:140395"/>
        <dbReference type="EC" id="2.7.7.6"/>
    </reaction>
</comment>
<comment type="subunit">
    <text evidence="1">In plastids the minimal PEP RNA polymerase catalytic core is composed of four subunits: alpha, beta, beta', and beta''. When a (nuclear-encoded) sigma factor is associated with the core the holoenzyme is formed, which can initiate transcription.</text>
</comment>
<comment type="subcellular location">
    <subcellularLocation>
        <location>Plastid</location>
        <location>Chloroplast</location>
    </subcellularLocation>
</comment>
<comment type="domain">
    <text evidence="1">The N-terminal domain is essential for RNAP assembly and basal transcription, whereas the C-terminal domain is involved in interaction with transcriptional regulators and with upstream promoter elements.</text>
</comment>
<comment type="similarity">
    <text evidence="1">Belongs to the RNA polymerase alpha chain family.</text>
</comment>
<proteinExistence type="inferred from homology"/>
<gene>
    <name evidence="1" type="primary">rpoA</name>
</gene>
<feature type="chain" id="PRO_0000175497" description="DNA-directed RNA polymerase subunit alpha">
    <location>
        <begin position="1"/>
        <end position="344"/>
    </location>
</feature>
<feature type="region of interest" description="Alpha N-terminal domain (alpha-NTD)" evidence="1">
    <location>
        <begin position="1"/>
        <end position="232"/>
    </location>
</feature>
<feature type="region of interest" description="Alpha C-terminal domain (alpha-CTD)" evidence="1">
    <location>
        <begin position="270"/>
        <end position="344"/>
    </location>
</feature>
<geneLocation type="chloroplast"/>
<protein>
    <recommendedName>
        <fullName evidence="1">DNA-directed RNA polymerase subunit alpha</fullName>
        <shortName evidence="1">PEP</shortName>
        <ecNumber evidence="1">2.7.7.6</ecNumber>
    </recommendedName>
    <alternativeName>
        <fullName evidence="1">Plastid-encoded RNA polymerase subunit alpha</fullName>
        <shortName evidence="1">RNA polymerase subunit alpha</shortName>
    </alternativeName>
</protein>
<organism>
    <name type="scientific">Spirogyra maxima</name>
    <name type="common">Green alga</name>
    <dbReference type="NCBI Taxonomy" id="3180"/>
    <lineage>
        <taxon>Eukaryota</taxon>
        <taxon>Viridiplantae</taxon>
        <taxon>Streptophyta</taxon>
        <taxon>Zygnematophyceae</taxon>
        <taxon>Zygnematophycidae</taxon>
        <taxon>Zygnematales</taxon>
        <taxon>Zygnemataceae</taxon>
        <taxon>Spirogyra</taxon>
    </lineage>
</organism>
<reference key="1">
    <citation type="submission" date="1998-02" db="EMBL/GenBank/DDBJ databases">
        <title>Chloroplast rpl23 gene cluster of Spirogyra maxima (Charophyceae), shared by land plants.</title>
        <authorList>
            <person name="Lee J."/>
            <person name="Manhart J.R."/>
        </authorList>
    </citation>
    <scope>NUCLEOTIDE SEQUENCE [GENOMIC DNA]</scope>
    <source>
        <strain>UTEX LB 2495</strain>
    </source>
</reference>
<accession>O98462</accession>
<name>RPOA_SPIMX</name>
<sequence length="344" mass="38838">MGQYTINLRESYPVWKIGSKIDSTKEECLDYMLFIASPLLAGQATTLGVAIRRTLLESIQGTAIVAAKIYGAAHEYSTLEGIQESIHDILLNLKQVIIKNKICEFQKCLISIIGPKKVTAADIELSQNITISNPYHHIATITKPIRFQVELIINKGRGYLIQDGNDVQDGYFPVDALFNPVRNVNFSIHNLAEQQEALILEIWTNGAITPLDALRQGSENLIHLFLPPFGLEDDTYMTSLGSQDYNIHIKNSLKEKFELHSIERIEDSHLIKDQFLEYSKTPIELLELSTRPFKCLKNANIYTINDLLKLSQQDLLKISNMGPSSVKQIVEALDKRFGINLKLK</sequence>